<protein>
    <recommendedName>
        <fullName>Chorion-specific transcription factor GCMa</fullName>
        <shortName>hGCMa</shortName>
    </recommendedName>
    <alternativeName>
        <fullName>GCM motif protein 1</fullName>
    </alternativeName>
    <alternativeName>
        <fullName>Glial cells missing homolog 1</fullName>
    </alternativeName>
</protein>
<evidence type="ECO:0000255" key="1">
    <source>
        <dbReference type="PROSITE-ProRule" id="PRU00245"/>
    </source>
</evidence>
<evidence type="ECO:0000256" key="2">
    <source>
        <dbReference type="SAM" id="MobiDB-lite"/>
    </source>
</evidence>
<evidence type="ECO:0000269" key="3">
    <source>
    </source>
</evidence>
<evidence type="ECO:0000269" key="4">
    <source>
    </source>
</evidence>
<evidence type="ECO:0000269" key="5">
    <source>
    </source>
</evidence>
<evidence type="ECO:0000269" key="6">
    <source>
    </source>
</evidence>
<evidence type="ECO:0000269" key="7">
    <source>
    </source>
</evidence>
<evidence type="ECO:0000305" key="8"/>
<sequence>MEPDDFDSEDKEILSWDINDVKLPQNVKKTDWFQEWPDSYAKHIYSSEDKNAQRHLSSWAMRNTNNHNSRILKKSCLGVVVCGRDCLAEEGRKIYLRPAICDKARQKQQRKRCPNCDGPLKLIPCRGHGGFPVTNFWRHDGRFIFFQSKGEHDHPKPETKLEAEARRAMKKVNTAPSSVSLSLKGSTETRSLPGETQSQGSLPLTWSFQEGVQLPGSYSGHLIANTPQQNSLNDCFSFSKSYGLGGITDLTDQTSTVDPMKLYEKRKLSSSRTYSSGDLLPPSASGVYSDHGDLQAWSKNAALGRNHLADNCYSNYPFPLTSWPCSFSPSQNSSEPFYQQLPLEPPAAKTGCPPLWPNPAGNLYEEKVHVDFNSYVQSPAYHSPQEDPFLFTYASHPHQQYSLPSKSSKWDFEEEMTYLGLDHCNNDMLLNLCPLR</sequence>
<keyword id="KW-0217">Developmental protein</keyword>
<keyword id="KW-0238">DNA-binding</keyword>
<keyword id="KW-0479">Metal-binding</keyword>
<keyword id="KW-0539">Nucleus</keyword>
<keyword id="KW-1267">Proteomics identification</keyword>
<keyword id="KW-1185">Reference proteome</keyword>
<keyword id="KW-0804">Transcription</keyword>
<keyword id="KW-0805">Transcription regulation</keyword>
<keyword id="KW-0832">Ubl conjugation</keyword>
<keyword id="KW-0862">Zinc</keyword>
<feature type="chain" id="PRO_0000126647" description="Chorion-specific transcription factor GCMa">
    <location>
        <begin position="1"/>
        <end position="436"/>
    </location>
</feature>
<feature type="DNA-binding region" description="GCM" evidence="1">
    <location>
        <begin position="14"/>
        <end position="169"/>
    </location>
</feature>
<feature type="region of interest" description="Disordered" evidence="2">
    <location>
        <begin position="171"/>
        <end position="202"/>
    </location>
</feature>
<feature type="compositionally biased region" description="Polar residues" evidence="2">
    <location>
        <begin position="174"/>
        <end position="202"/>
    </location>
</feature>
<feature type="binding site" evidence="1">
    <location>
        <position position="76"/>
    </location>
    <ligand>
        <name>Zn(2+)</name>
        <dbReference type="ChEBI" id="CHEBI:29105"/>
        <label>1</label>
    </ligand>
</feature>
<feature type="binding site" evidence="1">
    <location>
        <position position="82"/>
    </location>
    <ligand>
        <name>Zn(2+)</name>
        <dbReference type="ChEBI" id="CHEBI:29105"/>
        <label>2</label>
    </ligand>
</feature>
<feature type="binding site" evidence="1">
    <location>
        <position position="86"/>
    </location>
    <ligand>
        <name>Zn(2+)</name>
        <dbReference type="ChEBI" id="CHEBI:29105"/>
        <label>2</label>
    </ligand>
</feature>
<feature type="binding site" evidence="1">
    <location>
        <position position="113"/>
    </location>
    <ligand>
        <name>Zn(2+)</name>
        <dbReference type="ChEBI" id="CHEBI:29105"/>
        <label>2</label>
    </ligand>
</feature>
<feature type="binding site" evidence="1">
    <location>
        <position position="116"/>
    </location>
    <ligand>
        <name>Zn(2+)</name>
        <dbReference type="ChEBI" id="CHEBI:29105"/>
        <label>2</label>
    </ligand>
</feature>
<feature type="binding site" evidence="1">
    <location>
        <position position="125"/>
    </location>
    <ligand>
        <name>Zn(2+)</name>
        <dbReference type="ChEBI" id="CHEBI:29105"/>
        <label>1</label>
    </ligand>
</feature>
<feature type="binding site" evidence="1">
    <location>
        <position position="152"/>
    </location>
    <ligand>
        <name>Zn(2+)</name>
        <dbReference type="ChEBI" id="CHEBI:29105"/>
        <label>1</label>
    </ligand>
</feature>
<feature type="binding site" evidence="1">
    <location>
        <position position="154"/>
    </location>
    <ligand>
        <name>Zn(2+)</name>
        <dbReference type="ChEBI" id="CHEBI:29105"/>
        <label>1</label>
    </ligand>
</feature>
<feature type="sequence conflict" description="In Ref. 1; BAA13651." evidence="8" ref="1">
    <original>F</original>
    <variation>S</variation>
    <location>
        <position position="6"/>
    </location>
</feature>
<feature type="sequence conflict" description="In Ref. 1; BAA13651." evidence="8" ref="1">
    <original>E</original>
    <variation>G</variation>
    <location>
        <position position="386"/>
    </location>
</feature>
<name>GCM1_HUMAN</name>
<accession>Q9NP62</accession>
<accession>Q4VAQ7</accession>
<accession>Q5T0X0</accession>
<accession>Q99468</accession>
<accession>Q9P1X3</accession>
<comment type="function">
    <text evidence="3 4 6 7">Transcription factor involved in the control of expression of placental growth factor (PGF) and other placenta-specific genes (PubMed:10542267, PubMed:18160678). Binds to the trophoblast-specific element 2 (TSE2) of the aromatase gene enhancer (PubMed:10542267). Binds to the SYDE1 promoter (PubMed:27917469). Has a central role in mediating the differentiation of trophoblast cells along both the villous and extravillous pathways in placental development (PubMed:19219068).</text>
</comment>
<comment type="interaction">
    <interactant intactId="EBI-21194843">
        <id>Q9NP62</id>
    </interactant>
    <interactant intactId="EBI-3908248">
        <id>O60479</id>
        <label>DLX3</label>
    </interactant>
    <organismsDiffer>false</organismsDiffer>
    <experiments>2</experiments>
</comment>
<comment type="interaction">
    <interactant intactId="EBI-21194843">
        <id>Q9NP62</id>
    </interactant>
    <interactant intactId="EBI-914727">
        <id>Q9UKT8</id>
        <label>FBXW2</label>
    </interactant>
    <organismsDiffer>false</organismsDiffer>
    <experiments>4</experiments>
</comment>
<comment type="interaction">
    <interactant intactId="EBI-21194843">
        <id>Q9NP62</id>
    </interactant>
    <interactant intactId="EBI-6664760">
        <id>P23771</id>
        <label>GATA3</label>
    </interactant>
    <organismsDiffer>false</organismsDiffer>
    <experiments>9</experiments>
</comment>
<comment type="subcellular location">
    <subcellularLocation>
        <location evidence="1">Nucleus</location>
    </subcellularLocation>
</comment>
<comment type="tissue specificity">
    <text evidence="3 7">Highly expressed in the placenta (PubMed:10542267). Expressed in trophoblast cells of the villi (PubMed:27917469).</text>
</comment>
<comment type="PTM">
    <text evidence="5">Polyubiquitinated in the presence of UBE2D2 and FBXW2 (in vitro).</text>
</comment>
<organism>
    <name type="scientific">Homo sapiens</name>
    <name type="common">Human</name>
    <dbReference type="NCBI Taxonomy" id="9606"/>
    <lineage>
        <taxon>Eukaryota</taxon>
        <taxon>Metazoa</taxon>
        <taxon>Chordata</taxon>
        <taxon>Craniata</taxon>
        <taxon>Vertebrata</taxon>
        <taxon>Euteleostomi</taxon>
        <taxon>Mammalia</taxon>
        <taxon>Eutheria</taxon>
        <taxon>Euarchontoglires</taxon>
        <taxon>Primates</taxon>
        <taxon>Haplorrhini</taxon>
        <taxon>Catarrhini</taxon>
        <taxon>Hominidae</taxon>
        <taxon>Homo</taxon>
    </lineage>
</organism>
<gene>
    <name type="primary">GCM1</name>
    <name type="synonym">GCMA</name>
</gene>
<proteinExistence type="evidence at protein level"/>
<reference key="1">
    <citation type="journal article" date="1996" name="Proc. Natl. Acad. Sci. U.S.A.">
        <title>The gcm-motif: a novel DNA binding motif conserved in Drosophila and mammals.</title>
        <authorList>
            <person name="Akiyama Y."/>
            <person name="Hosoya T."/>
            <person name="Poole A.M."/>
            <person name="Hotta Y."/>
        </authorList>
    </citation>
    <scope>NUCLEOTIDE SEQUENCE [MRNA]</scope>
    <source>
        <tissue>Placenta</tissue>
    </source>
</reference>
<reference key="2">
    <citation type="submission" date="2000-04" db="EMBL/GenBank/DDBJ databases">
        <title>Structure of human GCMa cDNA and gene.</title>
        <authorList>
            <person name="Nishizawa M."/>
            <person name="Ito S."/>
        </authorList>
    </citation>
    <scope>NUCLEOTIDE SEQUENCE [GENOMIC DNA / MRNA]</scope>
    <source>
        <tissue>Liver</tissue>
        <tissue>Placenta</tissue>
    </source>
</reference>
<reference key="3">
    <citation type="journal article" date="1999" name="J. Biol. Chem.">
        <title>A GCM motif protein is involved in placenta-specific expression of human aromatase gene.</title>
        <authorList>
            <person name="Yamada K."/>
            <person name="Ogawa H."/>
            <person name="Honda S."/>
            <person name="Harada N."/>
            <person name="Okazaki T."/>
        </authorList>
    </citation>
    <scope>NUCLEOTIDE SEQUENCE [MRNA]</scope>
    <scope>FUNCTION</scope>
    <scope>TISSUE SPECIFICITY</scope>
    <source>
        <tissue>Placenta</tissue>
    </source>
</reference>
<reference key="4">
    <citation type="journal article" date="2000" name="Biochem. Biophys. Res. Commun.">
        <title>Genomic organization, chromosomal localization, and the complete 22 kb DNA sequence of the human GCMa/GCM1, a placenta-specific transcription factor gene.</title>
        <authorList>
            <person name="Yamada K."/>
            <person name="Ogawa H."/>
            <person name="Tamiya G."/>
            <person name="Ikeno M."/>
            <person name="Morita M."/>
            <person name="Asakawa S."/>
            <person name="Shimizu N."/>
            <person name="Okazaki T."/>
        </authorList>
    </citation>
    <scope>NUCLEOTIDE SEQUENCE [GENOMIC DNA]</scope>
</reference>
<reference key="5">
    <citation type="journal article" date="2003" name="Nature">
        <title>The DNA sequence and analysis of human chromosome 6.</title>
        <authorList>
            <person name="Mungall A.J."/>
            <person name="Palmer S.A."/>
            <person name="Sims S.K."/>
            <person name="Edwards C.A."/>
            <person name="Ashurst J.L."/>
            <person name="Wilming L."/>
            <person name="Jones M.C."/>
            <person name="Horton R."/>
            <person name="Hunt S.E."/>
            <person name="Scott C.E."/>
            <person name="Gilbert J.G.R."/>
            <person name="Clamp M.E."/>
            <person name="Bethel G."/>
            <person name="Milne S."/>
            <person name="Ainscough R."/>
            <person name="Almeida J.P."/>
            <person name="Ambrose K.D."/>
            <person name="Andrews T.D."/>
            <person name="Ashwell R.I.S."/>
            <person name="Babbage A.K."/>
            <person name="Bagguley C.L."/>
            <person name="Bailey J."/>
            <person name="Banerjee R."/>
            <person name="Barker D.J."/>
            <person name="Barlow K.F."/>
            <person name="Bates K."/>
            <person name="Beare D.M."/>
            <person name="Beasley H."/>
            <person name="Beasley O."/>
            <person name="Bird C.P."/>
            <person name="Blakey S.E."/>
            <person name="Bray-Allen S."/>
            <person name="Brook J."/>
            <person name="Brown A.J."/>
            <person name="Brown J.Y."/>
            <person name="Burford D.C."/>
            <person name="Burrill W."/>
            <person name="Burton J."/>
            <person name="Carder C."/>
            <person name="Carter N.P."/>
            <person name="Chapman J.C."/>
            <person name="Clark S.Y."/>
            <person name="Clark G."/>
            <person name="Clee C.M."/>
            <person name="Clegg S."/>
            <person name="Cobley V."/>
            <person name="Collier R.E."/>
            <person name="Collins J.E."/>
            <person name="Colman L.K."/>
            <person name="Corby N.R."/>
            <person name="Coville G.J."/>
            <person name="Culley K.M."/>
            <person name="Dhami P."/>
            <person name="Davies J."/>
            <person name="Dunn M."/>
            <person name="Earthrowl M.E."/>
            <person name="Ellington A.E."/>
            <person name="Evans K.A."/>
            <person name="Faulkner L."/>
            <person name="Francis M.D."/>
            <person name="Frankish A."/>
            <person name="Frankland J."/>
            <person name="French L."/>
            <person name="Garner P."/>
            <person name="Garnett J."/>
            <person name="Ghori M.J."/>
            <person name="Gilby L.M."/>
            <person name="Gillson C.J."/>
            <person name="Glithero R.J."/>
            <person name="Grafham D.V."/>
            <person name="Grant M."/>
            <person name="Gribble S."/>
            <person name="Griffiths C."/>
            <person name="Griffiths M.N.D."/>
            <person name="Hall R."/>
            <person name="Halls K.S."/>
            <person name="Hammond S."/>
            <person name="Harley J.L."/>
            <person name="Hart E.A."/>
            <person name="Heath P.D."/>
            <person name="Heathcott R."/>
            <person name="Holmes S.J."/>
            <person name="Howden P.J."/>
            <person name="Howe K.L."/>
            <person name="Howell G.R."/>
            <person name="Huckle E."/>
            <person name="Humphray S.J."/>
            <person name="Humphries M.D."/>
            <person name="Hunt A.R."/>
            <person name="Johnson C.M."/>
            <person name="Joy A.A."/>
            <person name="Kay M."/>
            <person name="Keenan S.J."/>
            <person name="Kimberley A.M."/>
            <person name="King A."/>
            <person name="Laird G.K."/>
            <person name="Langford C."/>
            <person name="Lawlor S."/>
            <person name="Leongamornlert D.A."/>
            <person name="Leversha M."/>
            <person name="Lloyd C.R."/>
            <person name="Lloyd D.M."/>
            <person name="Loveland J.E."/>
            <person name="Lovell J."/>
            <person name="Martin S."/>
            <person name="Mashreghi-Mohammadi M."/>
            <person name="Maslen G.L."/>
            <person name="Matthews L."/>
            <person name="McCann O.T."/>
            <person name="McLaren S.J."/>
            <person name="McLay K."/>
            <person name="McMurray A."/>
            <person name="Moore M.J.F."/>
            <person name="Mullikin J.C."/>
            <person name="Niblett D."/>
            <person name="Nickerson T."/>
            <person name="Novik K.L."/>
            <person name="Oliver K."/>
            <person name="Overton-Larty E.K."/>
            <person name="Parker A."/>
            <person name="Patel R."/>
            <person name="Pearce A.V."/>
            <person name="Peck A.I."/>
            <person name="Phillimore B.J.C.T."/>
            <person name="Phillips S."/>
            <person name="Plumb R.W."/>
            <person name="Porter K.M."/>
            <person name="Ramsey Y."/>
            <person name="Ranby S.A."/>
            <person name="Rice C.M."/>
            <person name="Ross M.T."/>
            <person name="Searle S.M."/>
            <person name="Sehra H.K."/>
            <person name="Sheridan E."/>
            <person name="Skuce C.D."/>
            <person name="Smith S."/>
            <person name="Smith M."/>
            <person name="Spraggon L."/>
            <person name="Squares S.L."/>
            <person name="Steward C.A."/>
            <person name="Sycamore N."/>
            <person name="Tamlyn-Hall G."/>
            <person name="Tester J."/>
            <person name="Theaker A.J."/>
            <person name="Thomas D.W."/>
            <person name="Thorpe A."/>
            <person name="Tracey A."/>
            <person name="Tromans A."/>
            <person name="Tubby B."/>
            <person name="Wall M."/>
            <person name="Wallis J.M."/>
            <person name="West A.P."/>
            <person name="White S.S."/>
            <person name="Whitehead S.L."/>
            <person name="Whittaker H."/>
            <person name="Wild A."/>
            <person name="Willey D.J."/>
            <person name="Wilmer T.E."/>
            <person name="Wood J.M."/>
            <person name="Wray P.W."/>
            <person name="Wyatt J.C."/>
            <person name="Young L."/>
            <person name="Younger R.M."/>
            <person name="Bentley D.R."/>
            <person name="Coulson A."/>
            <person name="Durbin R.M."/>
            <person name="Hubbard T."/>
            <person name="Sulston J.E."/>
            <person name="Dunham I."/>
            <person name="Rogers J."/>
            <person name="Beck S."/>
        </authorList>
    </citation>
    <scope>NUCLEOTIDE SEQUENCE [LARGE SCALE GENOMIC DNA]</scope>
</reference>
<reference key="6">
    <citation type="journal article" date="2004" name="Genome Res.">
        <title>The status, quality, and expansion of the NIH full-length cDNA project: the Mammalian Gene Collection (MGC).</title>
        <authorList>
            <consortium name="The MGC Project Team"/>
        </authorList>
    </citation>
    <scope>NUCLEOTIDE SEQUENCE [LARGE SCALE MRNA]</scope>
</reference>
<reference key="7">
    <citation type="journal article" date="2008" name="Biol. Reprod.">
        <title>Glial cell missing 1 regulates placental growth factor (PGF) gene transcription in human trophoblast.</title>
        <authorList>
            <person name="Chang M."/>
            <person name="Mukherjea D."/>
            <person name="Gobble R.M."/>
            <person name="Groesch K.A."/>
            <person name="Torry R.J."/>
            <person name="Torry D.S."/>
        </authorList>
    </citation>
    <scope>FUNCTION</scope>
</reference>
<reference key="8">
    <citation type="journal article" date="2008" name="Biol. Reprod.">
        <title>Ubiquitin-conjugating enzyme UBE2D2 is responsible for FBXW2 (F-box and WD repeat domain containing 2)-mediated human GCM1 (glial cell missing homolog 1) ubiquitination and degradation.</title>
        <authorList>
            <person name="Chiang M.H."/>
            <person name="Chen L.F."/>
            <person name="Chen H."/>
        </authorList>
    </citation>
    <scope>POLYUBIQUITINATION</scope>
</reference>
<reference key="9">
    <citation type="journal article" date="2009" name="Cell Death Differ.">
        <title>Glial cell missing-1 transcription factor is required for the differentiation of the human trophoblast.</title>
        <authorList>
            <person name="Baczyk D."/>
            <person name="Drewlo S."/>
            <person name="Proctor L."/>
            <person name="Dunk C."/>
            <person name="Lye S."/>
            <person name="Kingdom J."/>
        </authorList>
    </citation>
    <scope>FUNCTION</scope>
</reference>
<reference key="10">
    <citation type="journal article" date="2017" name="J. Pathol.">
        <title>Association of dysfunctional synapse defective 1 (SYDE1) with restricted fetal growth - SYDE1 regulates placental cell migration and invasion.</title>
        <authorList>
            <person name="Lo H.F."/>
            <person name="Tsai C.Y."/>
            <person name="Chen C.P."/>
            <person name="Wang L.J."/>
            <person name="Lee Y.S."/>
            <person name="Chen C.Y."/>
            <person name="Liang C.T."/>
            <person name="Cheong M.L."/>
            <person name="Chen H."/>
        </authorList>
    </citation>
    <scope>FUNCTION</scope>
    <scope>TISSUE SPECIFICITY</scope>
</reference>
<dbReference type="EMBL" id="D88613">
    <property type="protein sequence ID" value="BAA13651.1"/>
    <property type="molecule type" value="mRNA"/>
</dbReference>
<dbReference type="EMBL" id="AB041714">
    <property type="protein sequence ID" value="BAA94757.1"/>
    <property type="molecule type" value="mRNA"/>
</dbReference>
<dbReference type="EMBL" id="AB041716">
    <property type="protein sequence ID" value="BAA94758.1"/>
    <property type="molecule type" value="Genomic_DNA"/>
</dbReference>
<dbReference type="EMBL" id="AB026493">
    <property type="protein sequence ID" value="BAA77250.2"/>
    <property type="molecule type" value="mRNA"/>
</dbReference>
<dbReference type="EMBL" id="AB047819">
    <property type="protein sequence ID" value="BAB18039.1"/>
    <property type="molecule type" value="Genomic_DNA"/>
</dbReference>
<dbReference type="EMBL" id="AL512347">
    <property type="status" value="NOT_ANNOTATED_CDS"/>
    <property type="molecule type" value="Genomic_DNA"/>
</dbReference>
<dbReference type="EMBL" id="BC096288">
    <property type="protein sequence ID" value="AAH96288.1"/>
    <property type="molecule type" value="mRNA"/>
</dbReference>
<dbReference type="CCDS" id="CCDS4950.1"/>
<dbReference type="RefSeq" id="NP_003634.2">
    <property type="nucleotide sequence ID" value="NM_003643.3"/>
</dbReference>
<dbReference type="SMR" id="Q9NP62"/>
<dbReference type="BioGRID" id="114093">
    <property type="interactions" value="67"/>
</dbReference>
<dbReference type="FunCoup" id="Q9NP62">
    <property type="interactions" value="86"/>
</dbReference>
<dbReference type="IntAct" id="Q9NP62">
    <property type="interactions" value="59"/>
</dbReference>
<dbReference type="STRING" id="9606.ENSP00000259803"/>
<dbReference type="GlyGen" id="Q9NP62">
    <property type="glycosylation" value="1 site, 1 O-linked glycan (1 site)"/>
</dbReference>
<dbReference type="iPTMnet" id="Q9NP62"/>
<dbReference type="PhosphoSitePlus" id="Q9NP62"/>
<dbReference type="BioMuta" id="GCM1"/>
<dbReference type="DMDM" id="33516903"/>
<dbReference type="MassIVE" id="Q9NP62"/>
<dbReference type="PaxDb" id="9606-ENSP00000259803"/>
<dbReference type="PeptideAtlas" id="Q9NP62"/>
<dbReference type="ProteomicsDB" id="81893"/>
<dbReference type="Antibodypedia" id="17251">
    <property type="antibodies" value="330 antibodies from 32 providers"/>
</dbReference>
<dbReference type="DNASU" id="8521"/>
<dbReference type="Ensembl" id="ENST00000259803.8">
    <property type="protein sequence ID" value="ENSP00000259803.7"/>
    <property type="gene ID" value="ENSG00000137270.11"/>
</dbReference>
<dbReference type="GeneID" id="8521"/>
<dbReference type="KEGG" id="hsa:8521"/>
<dbReference type="MANE-Select" id="ENST00000259803.8">
    <property type="protein sequence ID" value="ENSP00000259803.7"/>
    <property type="RefSeq nucleotide sequence ID" value="NM_003643.4"/>
    <property type="RefSeq protein sequence ID" value="NP_003634.2"/>
</dbReference>
<dbReference type="UCSC" id="uc003pbp.4">
    <property type="organism name" value="human"/>
</dbReference>
<dbReference type="AGR" id="HGNC:4197"/>
<dbReference type="CTD" id="8521"/>
<dbReference type="DisGeNET" id="8521"/>
<dbReference type="GeneCards" id="GCM1"/>
<dbReference type="HGNC" id="HGNC:4197">
    <property type="gene designation" value="GCM1"/>
</dbReference>
<dbReference type="HPA" id="ENSG00000137270">
    <property type="expression patterns" value="Tissue enriched (placenta)"/>
</dbReference>
<dbReference type="MIM" id="603715">
    <property type="type" value="gene"/>
</dbReference>
<dbReference type="neXtProt" id="NX_Q9NP62"/>
<dbReference type="OpenTargets" id="ENSG00000137270"/>
<dbReference type="PharmGKB" id="PA28614"/>
<dbReference type="VEuPathDB" id="HostDB:ENSG00000137270"/>
<dbReference type="eggNOG" id="ENOG502QWH2">
    <property type="taxonomic scope" value="Eukaryota"/>
</dbReference>
<dbReference type="GeneTree" id="ENSGT00390000006777"/>
<dbReference type="HOGENOM" id="CLU_043105_0_0_1"/>
<dbReference type="InParanoid" id="Q9NP62"/>
<dbReference type="OMA" id="FPLTNWP"/>
<dbReference type="OrthoDB" id="6241117at2759"/>
<dbReference type="PAN-GO" id="Q9NP62">
    <property type="GO annotations" value="6 GO annotations based on evolutionary models"/>
</dbReference>
<dbReference type="PhylomeDB" id="Q9NP62"/>
<dbReference type="TreeFam" id="TF324146"/>
<dbReference type="PathwayCommons" id="Q9NP62"/>
<dbReference type="SignaLink" id="Q9NP62"/>
<dbReference type="SIGNOR" id="Q9NP62"/>
<dbReference type="BioGRID-ORCS" id="8521">
    <property type="hits" value="9 hits in 1169 CRISPR screens"/>
</dbReference>
<dbReference type="ChiTaRS" id="GCM1">
    <property type="organism name" value="human"/>
</dbReference>
<dbReference type="GeneWiki" id="GCM1"/>
<dbReference type="GenomeRNAi" id="8521"/>
<dbReference type="Pharos" id="Q9NP62">
    <property type="development level" value="Tbio"/>
</dbReference>
<dbReference type="PRO" id="PR:Q9NP62"/>
<dbReference type="Proteomes" id="UP000005640">
    <property type="component" value="Chromosome 6"/>
</dbReference>
<dbReference type="RNAct" id="Q9NP62">
    <property type="molecule type" value="protein"/>
</dbReference>
<dbReference type="Bgee" id="ENSG00000137270">
    <property type="expression patterns" value="Expressed in placenta and 48 other cell types or tissues"/>
</dbReference>
<dbReference type="GO" id="GO:0000785">
    <property type="term" value="C:chromatin"/>
    <property type="evidence" value="ECO:0000247"/>
    <property type="project" value="NTNU_SB"/>
</dbReference>
<dbReference type="GO" id="GO:0005634">
    <property type="term" value="C:nucleus"/>
    <property type="evidence" value="ECO:0000314"/>
    <property type="project" value="UniProtKB"/>
</dbReference>
<dbReference type="GO" id="GO:0005667">
    <property type="term" value="C:transcription regulator complex"/>
    <property type="evidence" value="ECO:0000314"/>
    <property type="project" value="MGI"/>
</dbReference>
<dbReference type="GO" id="GO:0003677">
    <property type="term" value="F:DNA binding"/>
    <property type="evidence" value="ECO:0000304"/>
    <property type="project" value="ProtInc"/>
</dbReference>
<dbReference type="GO" id="GO:0001228">
    <property type="term" value="F:DNA-binding transcription activator activity, RNA polymerase II-specific"/>
    <property type="evidence" value="ECO:0000314"/>
    <property type="project" value="NTNU_SB"/>
</dbReference>
<dbReference type="GO" id="GO:0003700">
    <property type="term" value="F:DNA-binding transcription factor activity"/>
    <property type="evidence" value="ECO:0000314"/>
    <property type="project" value="MGI"/>
</dbReference>
<dbReference type="GO" id="GO:0000981">
    <property type="term" value="F:DNA-binding transcription factor activity, RNA polymerase II-specific"/>
    <property type="evidence" value="ECO:0000314"/>
    <property type="project" value="UniProtKB"/>
</dbReference>
<dbReference type="GO" id="GO:0042826">
    <property type="term" value="F:histone deacetylase binding"/>
    <property type="evidence" value="ECO:0000353"/>
    <property type="project" value="UniProtKB"/>
</dbReference>
<dbReference type="GO" id="GO:0000978">
    <property type="term" value="F:RNA polymerase II cis-regulatory region sequence-specific DNA binding"/>
    <property type="evidence" value="ECO:0000314"/>
    <property type="project" value="NTNU_SB"/>
</dbReference>
<dbReference type="GO" id="GO:1990837">
    <property type="term" value="F:sequence-specific double-stranded DNA binding"/>
    <property type="evidence" value="ECO:0000314"/>
    <property type="project" value="ARUK-UCL"/>
</dbReference>
<dbReference type="GO" id="GO:0008270">
    <property type="term" value="F:zinc ion binding"/>
    <property type="evidence" value="ECO:0007669"/>
    <property type="project" value="Ensembl"/>
</dbReference>
<dbReference type="GO" id="GO:0009653">
    <property type="term" value="P:anatomical structure morphogenesis"/>
    <property type="evidence" value="ECO:0000304"/>
    <property type="project" value="ProtInc"/>
</dbReference>
<dbReference type="GO" id="GO:0060018">
    <property type="term" value="P:astrocyte fate commitment"/>
    <property type="evidence" value="ECO:0007669"/>
    <property type="project" value="Ensembl"/>
</dbReference>
<dbReference type="GO" id="GO:0060670">
    <property type="term" value="P:branching involved in labyrinthine layer morphogenesis"/>
    <property type="evidence" value="ECO:0007669"/>
    <property type="project" value="Ensembl"/>
</dbReference>
<dbReference type="GO" id="GO:0060706">
    <property type="term" value="P:cell differentiation involved in embryonic placenta development"/>
    <property type="evidence" value="ECO:0000318"/>
    <property type="project" value="GO_Central"/>
</dbReference>
<dbReference type="GO" id="GO:0042063">
    <property type="term" value="P:gliogenesis"/>
    <property type="evidence" value="ECO:0000318"/>
    <property type="project" value="GO_Central"/>
</dbReference>
<dbReference type="GO" id="GO:0045893">
    <property type="term" value="P:positive regulation of DNA-templated transcription"/>
    <property type="evidence" value="ECO:0000314"/>
    <property type="project" value="MGI"/>
</dbReference>
<dbReference type="GO" id="GO:0060143">
    <property type="term" value="P:positive regulation of syncytium formation by plasma membrane fusion"/>
    <property type="evidence" value="ECO:0007669"/>
    <property type="project" value="Ensembl"/>
</dbReference>
<dbReference type="GO" id="GO:0045944">
    <property type="term" value="P:positive regulation of transcription by RNA polymerase II"/>
    <property type="evidence" value="ECO:0000314"/>
    <property type="project" value="NTNU_SB"/>
</dbReference>
<dbReference type="GO" id="GO:0060800">
    <property type="term" value="P:regulation of cell differentiation involved in embryonic placenta development"/>
    <property type="evidence" value="ECO:0000315"/>
    <property type="project" value="UniProtKB"/>
</dbReference>
<dbReference type="GO" id="GO:0006355">
    <property type="term" value="P:regulation of DNA-templated transcription"/>
    <property type="evidence" value="ECO:0000314"/>
    <property type="project" value="MGI"/>
</dbReference>
<dbReference type="GO" id="GO:0006357">
    <property type="term" value="P:regulation of transcription by RNA polymerase II"/>
    <property type="evidence" value="ECO:0000318"/>
    <property type="project" value="GO_Central"/>
</dbReference>
<dbReference type="GO" id="GO:0000768">
    <property type="term" value="P:syncytium formation by plasma membrane fusion"/>
    <property type="evidence" value="ECO:0007669"/>
    <property type="project" value="Ensembl"/>
</dbReference>
<dbReference type="GO" id="GO:0006366">
    <property type="term" value="P:transcription by RNA polymerase II"/>
    <property type="evidence" value="ECO:0000314"/>
    <property type="project" value="UniProtKB"/>
</dbReference>
<dbReference type="FunFam" id="3.30.70.3530:FF:000001">
    <property type="entry name" value="Chorion-specific transcription factor GCMb"/>
    <property type="match status" value="1"/>
</dbReference>
<dbReference type="Gene3D" id="2.20.25.670">
    <property type="entry name" value="GCM domain, large subdomain"/>
    <property type="match status" value="1"/>
</dbReference>
<dbReference type="Gene3D" id="3.30.70.3530">
    <property type="entry name" value="GCM motif"/>
    <property type="match status" value="1"/>
</dbReference>
<dbReference type="InterPro" id="IPR039791">
    <property type="entry name" value="GCM"/>
</dbReference>
<dbReference type="InterPro" id="IPR036115">
    <property type="entry name" value="GCM_dom_sf"/>
</dbReference>
<dbReference type="InterPro" id="IPR043020">
    <property type="entry name" value="GCM_large"/>
</dbReference>
<dbReference type="InterPro" id="IPR043021">
    <property type="entry name" value="GCM_small"/>
</dbReference>
<dbReference type="InterPro" id="IPR003902">
    <property type="entry name" value="Tscrpt_reg_GCM"/>
</dbReference>
<dbReference type="PANTHER" id="PTHR12414:SF6">
    <property type="entry name" value="CHORION-SPECIFIC TRANSCRIPTION FACTOR GCMA"/>
    <property type="match status" value="1"/>
</dbReference>
<dbReference type="PANTHER" id="PTHR12414">
    <property type="entry name" value="GLIAL CELLS MISSING RELATED/GLIDE"/>
    <property type="match status" value="1"/>
</dbReference>
<dbReference type="Pfam" id="PF03615">
    <property type="entry name" value="GCM"/>
    <property type="match status" value="1"/>
</dbReference>
<dbReference type="SUPFAM" id="SSF90073">
    <property type="entry name" value="GCM domain"/>
    <property type="match status" value="1"/>
</dbReference>
<dbReference type="PROSITE" id="PS50807">
    <property type="entry name" value="GCM"/>
    <property type="match status" value="1"/>
</dbReference>